<accession>Q74MH3</accession>
<dbReference type="EC" id="3.1.26.4" evidence="1"/>
<dbReference type="EMBL" id="AE017199">
    <property type="protein sequence ID" value="AAR38918.1"/>
    <property type="molecule type" value="Genomic_DNA"/>
</dbReference>
<dbReference type="SMR" id="Q74MH3"/>
<dbReference type="STRING" id="228908.NEQ063"/>
<dbReference type="EnsemblBacteria" id="AAR38918">
    <property type="protein sequence ID" value="AAR38918"/>
    <property type="gene ID" value="NEQ063"/>
</dbReference>
<dbReference type="KEGG" id="neq:NEQ063"/>
<dbReference type="PATRIC" id="fig|228908.8.peg.63"/>
<dbReference type="HOGENOM" id="CLU_036532_0_4_2"/>
<dbReference type="Proteomes" id="UP000000578">
    <property type="component" value="Chromosome"/>
</dbReference>
<dbReference type="GO" id="GO:0005737">
    <property type="term" value="C:cytoplasm"/>
    <property type="evidence" value="ECO:0007669"/>
    <property type="project" value="UniProtKB-SubCell"/>
</dbReference>
<dbReference type="GO" id="GO:0032299">
    <property type="term" value="C:ribonuclease H2 complex"/>
    <property type="evidence" value="ECO:0007669"/>
    <property type="project" value="TreeGrafter"/>
</dbReference>
<dbReference type="GO" id="GO:0030145">
    <property type="term" value="F:manganese ion binding"/>
    <property type="evidence" value="ECO:0007669"/>
    <property type="project" value="UniProtKB-UniRule"/>
</dbReference>
<dbReference type="GO" id="GO:0003723">
    <property type="term" value="F:RNA binding"/>
    <property type="evidence" value="ECO:0007669"/>
    <property type="project" value="InterPro"/>
</dbReference>
<dbReference type="GO" id="GO:0004523">
    <property type="term" value="F:RNA-DNA hybrid ribonuclease activity"/>
    <property type="evidence" value="ECO:0007669"/>
    <property type="project" value="UniProtKB-UniRule"/>
</dbReference>
<dbReference type="GO" id="GO:0043137">
    <property type="term" value="P:DNA replication, removal of RNA primer"/>
    <property type="evidence" value="ECO:0007669"/>
    <property type="project" value="TreeGrafter"/>
</dbReference>
<dbReference type="GO" id="GO:0006298">
    <property type="term" value="P:mismatch repair"/>
    <property type="evidence" value="ECO:0007669"/>
    <property type="project" value="TreeGrafter"/>
</dbReference>
<dbReference type="CDD" id="cd07180">
    <property type="entry name" value="RNase_HII_archaea_like"/>
    <property type="match status" value="1"/>
</dbReference>
<dbReference type="Gene3D" id="3.30.420.10">
    <property type="entry name" value="Ribonuclease H-like superfamily/Ribonuclease H"/>
    <property type="match status" value="1"/>
</dbReference>
<dbReference type="Gene3D" id="1.10.10.460">
    <property type="entry name" value="Ribonuclease hii. Domain 2"/>
    <property type="match status" value="1"/>
</dbReference>
<dbReference type="HAMAP" id="MF_00052_A">
    <property type="entry name" value="RNase_HII_A"/>
    <property type="match status" value="1"/>
</dbReference>
<dbReference type="InterPro" id="IPR004649">
    <property type="entry name" value="RNase_H2_suA"/>
</dbReference>
<dbReference type="InterPro" id="IPR001352">
    <property type="entry name" value="RNase_HII/HIII"/>
</dbReference>
<dbReference type="InterPro" id="IPR024567">
    <property type="entry name" value="RNase_HII/HIII_dom"/>
</dbReference>
<dbReference type="InterPro" id="IPR020787">
    <property type="entry name" value="RNase_HII_arc"/>
</dbReference>
<dbReference type="InterPro" id="IPR023160">
    <property type="entry name" value="RNase_HII_hlx-loop-hlx_cap_dom"/>
</dbReference>
<dbReference type="InterPro" id="IPR012337">
    <property type="entry name" value="RNaseH-like_sf"/>
</dbReference>
<dbReference type="InterPro" id="IPR036397">
    <property type="entry name" value="RNaseH_sf"/>
</dbReference>
<dbReference type="NCBIfam" id="TIGR00729">
    <property type="entry name" value="ribonuclease HII"/>
    <property type="match status" value="1"/>
</dbReference>
<dbReference type="PANTHER" id="PTHR10954:SF23">
    <property type="entry name" value="RIBONUCLEASE"/>
    <property type="match status" value="1"/>
</dbReference>
<dbReference type="PANTHER" id="PTHR10954">
    <property type="entry name" value="RIBONUCLEASE H2 SUBUNIT A"/>
    <property type="match status" value="1"/>
</dbReference>
<dbReference type="Pfam" id="PF01351">
    <property type="entry name" value="RNase_HII"/>
    <property type="match status" value="1"/>
</dbReference>
<dbReference type="SUPFAM" id="SSF53098">
    <property type="entry name" value="Ribonuclease H-like"/>
    <property type="match status" value="1"/>
</dbReference>
<dbReference type="PROSITE" id="PS51975">
    <property type="entry name" value="RNASE_H_2"/>
    <property type="match status" value="1"/>
</dbReference>
<organism>
    <name type="scientific">Nanoarchaeum equitans (strain Kin4-M)</name>
    <dbReference type="NCBI Taxonomy" id="228908"/>
    <lineage>
        <taxon>Archaea</taxon>
        <taxon>Nanobdellota</taxon>
        <taxon>Candidatus Nanoarchaeia</taxon>
        <taxon>Nanoarchaeales</taxon>
        <taxon>Nanoarchaeaceae</taxon>
        <taxon>Nanoarchaeum</taxon>
    </lineage>
</organism>
<gene>
    <name evidence="1" type="primary">rnhB</name>
    <name type="ordered locus">NEQ063</name>
</gene>
<name>RNH2_NANEQ</name>
<evidence type="ECO:0000255" key="1">
    <source>
        <dbReference type="HAMAP-Rule" id="MF_00052"/>
    </source>
</evidence>
<evidence type="ECO:0000255" key="2">
    <source>
        <dbReference type="PROSITE-ProRule" id="PRU01319"/>
    </source>
</evidence>
<reference key="1">
    <citation type="journal article" date="2003" name="Proc. Natl. Acad. Sci. U.S.A.">
        <title>The genome of Nanoarchaeum equitans: insights into early archaeal evolution and derived parasitism.</title>
        <authorList>
            <person name="Waters E."/>
            <person name="Hohn M.J."/>
            <person name="Ahel I."/>
            <person name="Graham D.E."/>
            <person name="Adams M.D."/>
            <person name="Barnstead M."/>
            <person name="Beeson K.Y."/>
            <person name="Bibbs L."/>
            <person name="Bolanos R."/>
            <person name="Keller M."/>
            <person name="Kretz K."/>
            <person name="Lin X."/>
            <person name="Mathur E."/>
            <person name="Ni J."/>
            <person name="Podar M."/>
            <person name="Richardson T."/>
            <person name="Sutton G.G."/>
            <person name="Simon M."/>
            <person name="Soell D."/>
            <person name="Stetter K.O."/>
            <person name="Short J.M."/>
            <person name="Noorderwier M."/>
        </authorList>
    </citation>
    <scope>NUCLEOTIDE SEQUENCE [LARGE SCALE GENOMIC DNA]</scope>
    <source>
        <strain>Kin4-M</strain>
    </source>
</reference>
<proteinExistence type="inferred from homology"/>
<keyword id="KW-0963">Cytoplasm</keyword>
<keyword id="KW-0255">Endonuclease</keyword>
<keyword id="KW-0378">Hydrolase</keyword>
<keyword id="KW-0464">Manganese</keyword>
<keyword id="KW-0479">Metal-binding</keyword>
<keyword id="KW-0540">Nuclease</keyword>
<keyword id="KW-1185">Reference proteome</keyword>
<feature type="chain" id="PRO_0000236282" description="Ribonuclease HII">
    <location>
        <begin position="1"/>
        <end position="200"/>
    </location>
</feature>
<feature type="domain" description="RNase H type-2" evidence="2">
    <location>
        <begin position="1"/>
        <end position="200"/>
    </location>
</feature>
<feature type="binding site" evidence="1">
    <location>
        <position position="7"/>
    </location>
    <ligand>
        <name>a divalent metal cation</name>
        <dbReference type="ChEBI" id="CHEBI:60240"/>
    </ligand>
</feature>
<feature type="binding site" evidence="1">
    <location>
        <position position="8"/>
    </location>
    <ligand>
        <name>a divalent metal cation</name>
        <dbReference type="ChEBI" id="CHEBI:60240"/>
    </ligand>
</feature>
<feature type="binding site" evidence="1">
    <location>
        <position position="99"/>
    </location>
    <ligand>
        <name>a divalent metal cation</name>
        <dbReference type="ChEBI" id="CHEBI:60240"/>
    </ligand>
</feature>
<protein>
    <recommendedName>
        <fullName evidence="1">Ribonuclease HII</fullName>
        <shortName evidence="1">RNase HII</shortName>
        <ecNumber evidence="1">3.1.26.4</ecNumber>
    </recommendedName>
</protein>
<comment type="function">
    <text evidence="1">Endonuclease that specifically degrades the RNA of RNA-DNA hybrids.</text>
</comment>
<comment type="catalytic activity">
    <reaction evidence="1">
        <text>Endonucleolytic cleavage to 5'-phosphomonoester.</text>
        <dbReference type="EC" id="3.1.26.4"/>
    </reaction>
</comment>
<comment type="cofactor">
    <cofactor evidence="1">
        <name>Mn(2+)</name>
        <dbReference type="ChEBI" id="CHEBI:29035"/>
    </cofactor>
    <cofactor evidence="1">
        <name>Mg(2+)</name>
        <dbReference type="ChEBI" id="CHEBI:18420"/>
    </cofactor>
    <text evidence="1">Manganese or magnesium. Binds 1 divalent metal ion per monomer in the absence of substrate. May bind a second metal ion after substrate binding.</text>
</comment>
<comment type="subcellular location">
    <subcellularLocation>
        <location evidence="1">Cytoplasm</location>
    </subcellularLocation>
</comment>
<comment type="similarity">
    <text evidence="1">Belongs to the RNase HII family.</text>
</comment>
<sequence>MRYGGVDEAGRGPIIGPMVIALVIGDSGYLKELGVKDSKLLTKEQREELFNEIVKNSLVKYEIVSPSLIDRYNLNELEAKVTANLINSIEDEISHIVIDSPERPENYKLRILKYLKKRVKIITKNKGEEDPLVAAASIVAKVIRDREIEKIKEQTGIDFGSGYPSDKRTRKALEQYYRILKPYIRKKWPFEINKKLTDFI</sequence>